<evidence type="ECO:0000255" key="1">
    <source>
        <dbReference type="HAMAP-Rule" id="MF_01411"/>
    </source>
</evidence>
<feature type="signal peptide" evidence="1">
    <location>
        <begin position="1"/>
        <end position="24"/>
    </location>
</feature>
<feature type="chain" id="PRO_0000281637" description="LPS-assembly protein LptD">
    <location>
        <begin position="25"/>
        <end position="784"/>
    </location>
</feature>
<feature type="disulfide bond" evidence="1">
    <location>
        <begin position="31"/>
        <end position="724"/>
    </location>
</feature>
<feature type="disulfide bond" evidence="1">
    <location>
        <begin position="173"/>
        <end position="725"/>
    </location>
</feature>
<reference key="1">
    <citation type="journal article" date="2006" name="BMC Genomics">
        <title>Complete genome sequence of Shigella flexneri 5b and comparison with Shigella flexneri 2a.</title>
        <authorList>
            <person name="Nie H."/>
            <person name="Yang F."/>
            <person name="Zhang X."/>
            <person name="Yang J."/>
            <person name="Chen L."/>
            <person name="Wang J."/>
            <person name="Xiong Z."/>
            <person name="Peng J."/>
            <person name="Sun L."/>
            <person name="Dong J."/>
            <person name="Xue Y."/>
            <person name="Xu X."/>
            <person name="Chen S."/>
            <person name="Yao Z."/>
            <person name="Shen Y."/>
            <person name="Jin Q."/>
        </authorList>
    </citation>
    <scope>NUCLEOTIDE SEQUENCE [LARGE SCALE GENOMIC DNA]</scope>
    <source>
        <strain>8401</strain>
    </source>
</reference>
<dbReference type="EMBL" id="CP000266">
    <property type="protein sequence ID" value="ABF02335.1"/>
    <property type="molecule type" value="Genomic_DNA"/>
</dbReference>
<dbReference type="RefSeq" id="WP_000746144.1">
    <property type="nucleotide sequence ID" value="NC_008258.1"/>
</dbReference>
<dbReference type="SMR" id="Q0T8E1"/>
<dbReference type="KEGG" id="sfv:SFV_0048"/>
<dbReference type="HOGENOM" id="CLU_009039_2_0_6"/>
<dbReference type="Proteomes" id="UP000000659">
    <property type="component" value="Chromosome"/>
</dbReference>
<dbReference type="GO" id="GO:0009279">
    <property type="term" value="C:cell outer membrane"/>
    <property type="evidence" value="ECO:0007669"/>
    <property type="project" value="UniProtKB-SubCell"/>
</dbReference>
<dbReference type="GO" id="GO:1990351">
    <property type="term" value="C:transporter complex"/>
    <property type="evidence" value="ECO:0007669"/>
    <property type="project" value="TreeGrafter"/>
</dbReference>
<dbReference type="GO" id="GO:0043165">
    <property type="term" value="P:Gram-negative-bacterium-type cell outer membrane assembly"/>
    <property type="evidence" value="ECO:0007669"/>
    <property type="project" value="UniProtKB-UniRule"/>
</dbReference>
<dbReference type="GO" id="GO:0015920">
    <property type="term" value="P:lipopolysaccharide transport"/>
    <property type="evidence" value="ECO:0007669"/>
    <property type="project" value="InterPro"/>
</dbReference>
<dbReference type="FunFam" id="2.60.450.10:FF:000003">
    <property type="entry name" value="LPS-assembly protein LptD"/>
    <property type="match status" value="1"/>
</dbReference>
<dbReference type="Gene3D" id="2.60.450.10">
    <property type="entry name" value="Lipopolysaccharide (LPS) transport protein A like domain"/>
    <property type="match status" value="1"/>
</dbReference>
<dbReference type="HAMAP" id="MF_01411">
    <property type="entry name" value="LPS_assembly_LptD"/>
    <property type="match status" value="1"/>
</dbReference>
<dbReference type="InterPro" id="IPR020889">
    <property type="entry name" value="LipoPS_assembly_LptD"/>
</dbReference>
<dbReference type="InterPro" id="IPR050218">
    <property type="entry name" value="LptD"/>
</dbReference>
<dbReference type="InterPro" id="IPR007543">
    <property type="entry name" value="LptD_C"/>
</dbReference>
<dbReference type="InterPro" id="IPR005653">
    <property type="entry name" value="OstA-like_N"/>
</dbReference>
<dbReference type="NCBIfam" id="NF002997">
    <property type="entry name" value="PRK03761.1"/>
    <property type="match status" value="1"/>
</dbReference>
<dbReference type="PANTHER" id="PTHR30189">
    <property type="entry name" value="LPS-ASSEMBLY PROTEIN"/>
    <property type="match status" value="1"/>
</dbReference>
<dbReference type="PANTHER" id="PTHR30189:SF1">
    <property type="entry name" value="LPS-ASSEMBLY PROTEIN LPTD"/>
    <property type="match status" value="1"/>
</dbReference>
<dbReference type="Pfam" id="PF04453">
    <property type="entry name" value="LptD"/>
    <property type="match status" value="1"/>
</dbReference>
<dbReference type="Pfam" id="PF03968">
    <property type="entry name" value="LptD_N"/>
    <property type="match status" value="1"/>
</dbReference>
<proteinExistence type="inferred from homology"/>
<organism>
    <name type="scientific">Shigella flexneri serotype 5b (strain 8401)</name>
    <dbReference type="NCBI Taxonomy" id="373384"/>
    <lineage>
        <taxon>Bacteria</taxon>
        <taxon>Pseudomonadati</taxon>
        <taxon>Pseudomonadota</taxon>
        <taxon>Gammaproteobacteria</taxon>
        <taxon>Enterobacterales</taxon>
        <taxon>Enterobacteriaceae</taxon>
        <taxon>Shigella</taxon>
    </lineage>
</organism>
<protein>
    <recommendedName>
        <fullName evidence="1">LPS-assembly protein LptD</fullName>
    </recommendedName>
</protein>
<sequence length="784" mass="89638">MKKRIPTLLATMIATALYSQQGLAADLASQCMLGVPSYDRPLVQGDTNDLPVTINADHAKGDYPDDAVFTGSVDIMQGNSRLQADEVQLHQKEAPGQPEPVRTVDALGNVHYDDNQVILKGPKGWANLNTKDTNVWEGDYQMVGRQGRGKADLMKQRGENRYTILDNGSFTSCLPGSDTWSVVGSEIIHDREEQVAEIWNARFKVGPVPIFYSPYLQLPVGDKRRSGFLIPNAKYTTTNYFEFYLPYYWNIAPNMDATITPHYMHRRGNIMWENEFRYLSQAGAGLMELDYLPSDKVYEDEHPNDDSSRRWLFYWNHSGVMDQVWRFNVDYTKVSDPSYFNDFDNKYGSSTDGYATQKFSVGYAVQNFNATVSTKQFQVFSEQNTSSYSAEPQLDVNYYQNDVGPFDTRIYGQAVHFVNTRDDMPEATRVHLEPTINLPLSNNWGSINTEAKFLATHYQQTNLDWYNSRNTTKLDESVNRVMPQFKVDGKMVFERDIEMLAPGYTQTLEPRAQYLYVPYRDQSDIYNYDSSLLQSDYSGLFRDRTYGGLDRIASANQVTTGVTSRIYDDAAVERFNISVGQIYYFTESRTGDDNITWENDDKTGSLVWAGDTYWRISERWGLRGGIQYDTRLDNVATSNSSIEYRRDEDRLVQLNYHYASPEYIQATLPKYYSTAEQYKNGISQVGAVASRPIADRWSIVGAYYYDTNANKQADSMLGVQYSSCCYAIRVGYERKLNGWDNDKQHAVYDNAIGFNIELRGLSSNYGLGTQEMLRSNILPYQNTL</sequence>
<name>LPTD_SHIF8</name>
<keyword id="KW-0998">Cell outer membrane</keyword>
<keyword id="KW-1015">Disulfide bond</keyword>
<keyword id="KW-0472">Membrane</keyword>
<keyword id="KW-0732">Signal</keyword>
<accession>Q0T8E1</accession>
<comment type="function">
    <text evidence="1">Together with LptE, is involved in the assembly of lipopolysaccharide (LPS) at the surface of the outer membrane.</text>
</comment>
<comment type="subunit">
    <text evidence="1">Component of the lipopolysaccharide transport and assembly complex. Interacts with LptE and LptA.</text>
</comment>
<comment type="subcellular location">
    <subcellularLocation>
        <location evidence="1">Cell outer membrane</location>
    </subcellularLocation>
</comment>
<comment type="PTM">
    <text evidence="1">Contains two intramolecular disulfide bonds.</text>
</comment>
<comment type="similarity">
    <text evidence="1">Belongs to the LptD family.</text>
</comment>
<gene>
    <name evidence="1" type="primary">lptD</name>
    <name type="synonym">imp</name>
    <name type="synonym">ostA</name>
    <name type="ordered locus">SFV_0048</name>
</gene>